<protein>
    <recommendedName>
        <fullName evidence="1">Imidazole glycerol phosphate synthase subunit HisF</fullName>
        <ecNumber evidence="1">4.3.2.10</ecNumber>
    </recommendedName>
    <alternativeName>
        <fullName evidence="1">IGP synthase cyclase subunit</fullName>
    </alternativeName>
    <alternativeName>
        <fullName evidence="1">IGP synthase subunit HisF</fullName>
    </alternativeName>
    <alternativeName>
        <fullName evidence="1">ImGP synthase subunit HisF</fullName>
        <shortName evidence="1">IGPS subunit HisF</shortName>
    </alternativeName>
</protein>
<evidence type="ECO:0000255" key="1">
    <source>
        <dbReference type="HAMAP-Rule" id="MF_01013"/>
    </source>
</evidence>
<gene>
    <name evidence="1" type="primary">hisF</name>
    <name type="ordered locus">Helmi_29270</name>
    <name type="ORF">HM1_3045</name>
</gene>
<dbReference type="EC" id="4.3.2.10" evidence="1"/>
<dbReference type="EMBL" id="CP000930">
    <property type="protein sequence ID" value="ABZ85552.1"/>
    <property type="molecule type" value="Genomic_DNA"/>
</dbReference>
<dbReference type="RefSeq" id="WP_012284027.1">
    <property type="nucleotide sequence ID" value="NC_010337.2"/>
</dbReference>
<dbReference type="SMR" id="B0TDM7"/>
<dbReference type="STRING" id="498761.HM1_3045"/>
<dbReference type="KEGG" id="hmo:HM1_3045"/>
<dbReference type="eggNOG" id="COG0107">
    <property type="taxonomic scope" value="Bacteria"/>
</dbReference>
<dbReference type="HOGENOM" id="CLU_048577_4_0_9"/>
<dbReference type="OrthoDB" id="9781903at2"/>
<dbReference type="UniPathway" id="UPA00031">
    <property type="reaction ID" value="UER00010"/>
</dbReference>
<dbReference type="Proteomes" id="UP000008550">
    <property type="component" value="Chromosome"/>
</dbReference>
<dbReference type="GO" id="GO:0005737">
    <property type="term" value="C:cytoplasm"/>
    <property type="evidence" value="ECO:0007669"/>
    <property type="project" value="UniProtKB-SubCell"/>
</dbReference>
<dbReference type="GO" id="GO:0000107">
    <property type="term" value="F:imidazoleglycerol-phosphate synthase activity"/>
    <property type="evidence" value="ECO:0007669"/>
    <property type="project" value="UniProtKB-UniRule"/>
</dbReference>
<dbReference type="GO" id="GO:0016829">
    <property type="term" value="F:lyase activity"/>
    <property type="evidence" value="ECO:0007669"/>
    <property type="project" value="UniProtKB-KW"/>
</dbReference>
<dbReference type="GO" id="GO:0000105">
    <property type="term" value="P:L-histidine biosynthetic process"/>
    <property type="evidence" value="ECO:0007669"/>
    <property type="project" value="UniProtKB-UniRule"/>
</dbReference>
<dbReference type="CDD" id="cd04731">
    <property type="entry name" value="HisF"/>
    <property type="match status" value="1"/>
</dbReference>
<dbReference type="FunFam" id="3.20.20.70:FF:000006">
    <property type="entry name" value="Imidazole glycerol phosphate synthase subunit HisF"/>
    <property type="match status" value="1"/>
</dbReference>
<dbReference type="Gene3D" id="3.20.20.70">
    <property type="entry name" value="Aldolase class I"/>
    <property type="match status" value="1"/>
</dbReference>
<dbReference type="HAMAP" id="MF_01013">
    <property type="entry name" value="HisF"/>
    <property type="match status" value="1"/>
</dbReference>
<dbReference type="InterPro" id="IPR013785">
    <property type="entry name" value="Aldolase_TIM"/>
</dbReference>
<dbReference type="InterPro" id="IPR006062">
    <property type="entry name" value="His_biosynth"/>
</dbReference>
<dbReference type="InterPro" id="IPR004651">
    <property type="entry name" value="HisF"/>
</dbReference>
<dbReference type="InterPro" id="IPR050064">
    <property type="entry name" value="IGPS_HisA/HisF"/>
</dbReference>
<dbReference type="InterPro" id="IPR011060">
    <property type="entry name" value="RibuloseP-bd_barrel"/>
</dbReference>
<dbReference type="NCBIfam" id="TIGR00735">
    <property type="entry name" value="hisF"/>
    <property type="match status" value="1"/>
</dbReference>
<dbReference type="PANTHER" id="PTHR21235:SF2">
    <property type="entry name" value="IMIDAZOLE GLYCEROL PHOSPHATE SYNTHASE HISHF"/>
    <property type="match status" value="1"/>
</dbReference>
<dbReference type="PANTHER" id="PTHR21235">
    <property type="entry name" value="IMIDAZOLE GLYCEROL PHOSPHATE SYNTHASE SUBUNIT HISF/H IGP SYNTHASE SUBUNIT HISF/H"/>
    <property type="match status" value="1"/>
</dbReference>
<dbReference type="Pfam" id="PF00977">
    <property type="entry name" value="His_biosynth"/>
    <property type="match status" value="1"/>
</dbReference>
<dbReference type="SUPFAM" id="SSF51366">
    <property type="entry name" value="Ribulose-phoshate binding barrel"/>
    <property type="match status" value="1"/>
</dbReference>
<proteinExistence type="inferred from homology"/>
<organism>
    <name type="scientific">Heliobacterium modesticaldum (strain ATCC 51547 / Ice1)</name>
    <dbReference type="NCBI Taxonomy" id="498761"/>
    <lineage>
        <taxon>Bacteria</taxon>
        <taxon>Bacillati</taxon>
        <taxon>Bacillota</taxon>
        <taxon>Clostridia</taxon>
        <taxon>Eubacteriales</taxon>
        <taxon>Heliobacteriaceae</taxon>
        <taxon>Heliomicrobium</taxon>
    </lineage>
</organism>
<name>HIS6_HELMI</name>
<reference key="1">
    <citation type="journal article" date="2008" name="J. Bacteriol.">
        <title>The genome of Heliobacterium modesticaldum, a phototrophic representative of the Firmicutes containing the simplest photosynthetic apparatus.</title>
        <authorList>
            <person name="Sattley W.M."/>
            <person name="Madigan M.T."/>
            <person name="Swingley W.D."/>
            <person name="Cheung P.C."/>
            <person name="Clocksin K.M."/>
            <person name="Conrad A.L."/>
            <person name="Dejesa L.C."/>
            <person name="Honchak B.M."/>
            <person name="Jung D.O."/>
            <person name="Karbach L.E."/>
            <person name="Kurdoglu A."/>
            <person name="Lahiri S."/>
            <person name="Mastrian S.D."/>
            <person name="Page L.E."/>
            <person name="Taylor H.L."/>
            <person name="Wang Z.T."/>
            <person name="Raymond J."/>
            <person name="Chen M."/>
            <person name="Blankenship R.E."/>
            <person name="Touchman J.W."/>
        </authorList>
    </citation>
    <scope>NUCLEOTIDE SEQUENCE [LARGE SCALE GENOMIC DNA]</scope>
    <source>
        <strain>ATCC 51547 / Ice1</strain>
    </source>
</reference>
<comment type="function">
    <text evidence="1">IGPS catalyzes the conversion of PRFAR and glutamine to IGP, AICAR and glutamate. The HisF subunit catalyzes the cyclization activity that produces IGP and AICAR from PRFAR using the ammonia provided by the HisH subunit.</text>
</comment>
<comment type="catalytic activity">
    <reaction evidence="1">
        <text>5-[(5-phospho-1-deoxy-D-ribulos-1-ylimino)methylamino]-1-(5-phospho-beta-D-ribosyl)imidazole-4-carboxamide + L-glutamine = D-erythro-1-(imidazol-4-yl)glycerol 3-phosphate + 5-amino-1-(5-phospho-beta-D-ribosyl)imidazole-4-carboxamide + L-glutamate + H(+)</text>
        <dbReference type="Rhea" id="RHEA:24793"/>
        <dbReference type="ChEBI" id="CHEBI:15378"/>
        <dbReference type="ChEBI" id="CHEBI:29985"/>
        <dbReference type="ChEBI" id="CHEBI:58278"/>
        <dbReference type="ChEBI" id="CHEBI:58359"/>
        <dbReference type="ChEBI" id="CHEBI:58475"/>
        <dbReference type="ChEBI" id="CHEBI:58525"/>
        <dbReference type="EC" id="4.3.2.10"/>
    </reaction>
</comment>
<comment type="pathway">
    <text evidence="1">Amino-acid biosynthesis; L-histidine biosynthesis; L-histidine from 5-phospho-alpha-D-ribose 1-diphosphate: step 5/9.</text>
</comment>
<comment type="subunit">
    <text evidence="1">Heterodimer of HisH and HisF.</text>
</comment>
<comment type="subcellular location">
    <subcellularLocation>
        <location evidence="1">Cytoplasm</location>
    </subcellularLocation>
</comment>
<comment type="similarity">
    <text evidence="1">Belongs to the HisA/HisF family.</text>
</comment>
<sequence>MLAKRIIPCLDVHGGRVVKGTNFVNLRDAGDPVELAAVYDKEGADEVVFLDITASSDGRAIMLDVVRRTAEEVFIPFTVGGGLRSVEDIREMLKAGADKISLNTSAVQTPKLISDGAWKFGSQCIVVAIDARRRRDAEGNPVEGWEVYTHGGRKPTGIDVLEWARRVEELGAGEILLTSMDKDGTKDGYDIPLTRAVSEAVTIPVIASGGVGNLDHIVEGLTVGKADAALAASIFHYREYTIGETKEYLRERGVHVRQWRD</sequence>
<accession>B0TDM7</accession>
<feature type="chain" id="PRO_1000135007" description="Imidazole glycerol phosphate synthase subunit HisF">
    <location>
        <begin position="1"/>
        <end position="261"/>
    </location>
</feature>
<feature type="active site" evidence="1">
    <location>
        <position position="11"/>
    </location>
</feature>
<feature type="active site" evidence="1">
    <location>
        <position position="130"/>
    </location>
</feature>
<keyword id="KW-0028">Amino-acid biosynthesis</keyword>
<keyword id="KW-0963">Cytoplasm</keyword>
<keyword id="KW-0368">Histidine biosynthesis</keyword>
<keyword id="KW-0456">Lyase</keyword>
<keyword id="KW-1185">Reference proteome</keyword>